<proteinExistence type="uncertain"/>
<dbReference type="EMBL" id="BC066878">
    <property type="status" value="NOT_ANNOTATED_CDS"/>
    <property type="molecule type" value="mRNA"/>
</dbReference>
<dbReference type="EMBL" id="AB065922">
    <property type="protein sequence ID" value="BAC06137.1"/>
    <property type="status" value="ALT_SEQ"/>
    <property type="molecule type" value="Genomic_DNA"/>
</dbReference>
<dbReference type="EMBL" id="AB083621">
    <property type="protein sequence ID" value="BAB89334.1"/>
    <property type="molecule type" value="Genomic_DNA"/>
</dbReference>
<dbReference type="SMR" id="Q8NGA4"/>
<dbReference type="FunCoup" id="Q8NGA4">
    <property type="interactions" value="136"/>
</dbReference>
<dbReference type="GlyCosmos" id="Q8NGA4">
    <property type="glycosylation" value="2 sites, No reported glycans"/>
</dbReference>
<dbReference type="GlyGen" id="Q8NGA4">
    <property type="glycosylation" value="2 sites"/>
</dbReference>
<dbReference type="BioMuta" id="HGNC:4488"/>
<dbReference type="DMDM" id="205785988"/>
<dbReference type="PeptideAtlas" id="Q8NGA4"/>
<dbReference type="AGR" id="HGNC:4488"/>
<dbReference type="GeneCards" id="GPR32P1"/>
<dbReference type="HGNC" id="HGNC:4488">
    <property type="gene designation" value="GPR32P1"/>
</dbReference>
<dbReference type="neXtProt" id="NX_Q8NGA4"/>
<dbReference type="InParanoid" id="Q8NGA4"/>
<dbReference type="PAN-GO" id="Q8NGA4">
    <property type="GO annotations" value="7 GO annotations based on evolutionary models"/>
</dbReference>
<dbReference type="PhylomeDB" id="Q8NGA4"/>
<dbReference type="Pharos" id="Q8NGA4">
    <property type="development level" value="Tdark"/>
</dbReference>
<dbReference type="Proteomes" id="UP000005640">
    <property type="component" value="Unplaced"/>
</dbReference>
<dbReference type="RNAct" id="Q8NGA4">
    <property type="molecule type" value="protein"/>
</dbReference>
<dbReference type="GO" id="GO:0005886">
    <property type="term" value="C:plasma membrane"/>
    <property type="evidence" value="ECO:0000318"/>
    <property type="project" value="GO_Central"/>
</dbReference>
<dbReference type="GO" id="GO:0004875">
    <property type="term" value="F:complement receptor activity"/>
    <property type="evidence" value="ECO:0000318"/>
    <property type="project" value="GO_Central"/>
</dbReference>
<dbReference type="GO" id="GO:0004982">
    <property type="term" value="F:N-formyl peptide receptor activity"/>
    <property type="evidence" value="ECO:0000318"/>
    <property type="project" value="GO_Central"/>
</dbReference>
<dbReference type="GO" id="GO:0002430">
    <property type="term" value="P:complement receptor mediated signaling pathway"/>
    <property type="evidence" value="ECO:0000318"/>
    <property type="project" value="GO_Central"/>
</dbReference>
<dbReference type="GO" id="GO:0006954">
    <property type="term" value="P:inflammatory response"/>
    <property type="evidence" value="ECO:0000318"/>
    <property type="project" value="GO_Central"/>
</dbReference>
<dbReference type="GO" id="GO:0007200">
    <property type="term" value="P:phospholipase C-activating G protein-coupled receptor signaling pathway"/>
    <property type="evidence" value="ECO:0000318"/>
    <property type="project" value="GO_Central"/>
</dbReference>
<dbReference type="GO" id="GO:0007204">
    <property type="term" value="P:positive regulation of cytosolic calcium ion concentration"/>
    <property type="evidence" value="ECO:0000318"/>
    <property type="project" value="GO_Central"/>
</dbReference>
<dbReference type="FunFam" id="1.20.1070.10:FF:000315">
    <property type="entry name" value="G protein-coupled receptor 32"/>
    <property type="match status" value="1"/>
</dbReference>
<dbReference type="Gene3D" id="1.20.1070.10">
    <property type="entry name" value="Rhodopsin 7-helix transmembrane proteins"/>
    <property type="match status" value="1"/>
</dbReference>
<dbReference type="InterPro" id="IPR000826">
    <property type="entry name" value="Formyl_rcpt-rel"/>
</dbReference>
<dbReference type="InterPro" id="IPR000276">
    <property type="entry name" value="GPCR_Rhodpsn"/>
</dbReference>
<dbReference type="InterPro" id="IPR017452">
    <property type="entry name" value="GPCR_Rhodpsn_7TM"/>
</dbReference>
<dbReference type="PANTHER" id="PTHR24225">
    <property type="entry name" value="CHEMOTACTIC RECEPTOR"/>
    <property type="match status" value="1"/>
</dbReference>
<dbReference type="PANTHER" id="PTHR24225:SF27">
    <property type="entry name" value="G-PROTEIN COUPLED RECEPTOR 32-RELATED"/>
    <property type="match status" value="1"/>
</dbReference>
<dbReference type="Pfam" id="PF00001">
    <property type="entry name" value="7tm_1"/>
    <property type="match status" value="1"/>
</dbReference>
<dbReference type="PRINTS" id="PR00526">
    <property type="entry name" value="FMETLEUPHER"/>
</dbReference>
<dbReference type="PRINTS" id="PR00237">
    <property type="entry name" value="GPCRRHODOPSN"/>
</dbReference>
<dbReference type="SUPFAM" id="SSF81321">
    <property type="entry name" value="Family A G protein-coupled receptor-like"/>
    <property type="match status" value="1"/>
</dbReference>
<dbReference type="PROSITE" id="PS00237">
    <property type="entry name" value="G_PROTEIN_RECEP_F1_1"/>
    <property type="match status" value="1"/>
</dbReference>
<dbReference type="PROSITE" id="PS50262">
    <property type="entry name" value="G_PROTEIN_RECEP_F1_2"/>
    <property type="match status" value="1"/>
</dbReference>
<gene>
    <name type="primary">GPR32P1</name>
</gene>
<organism>
    <name type="scientific">Homo sapiens</name>
    <name type="common">Human</name>
    <dbReference type="NCBI Taxonomy" id="9606"/>
    <lineage>
        <taxon>Eukaryota</taxon>
        <taxon>Metazoa</taxon>
        <taxon>Chordata</taxon>
        <taxon>Craniata</taxon>
        <taxon>Vertebrata</taxon>
        <taxon>Euteleostomi</taxon>
        <taxon>Mammalia</taxon>
        <taxon>Eutheria</taxon>
        <taxon>Euarchontoglires</taxon>
        <taxon>Primates</taxon>
        <taxon>Haplorrhini</taxon>
        <taxon>Catarrhini</taxon>
        <taxon>Hominidae</taxon>
        <taxon>Homo</taxon>
    </lineage>
</organism>
<name>G32P1_HUMAN</name>
<accession>Q8NGA4</accession>
<accession>Q8TDT1</accession>
<feature type="chain" id="PRO_0000349275" description="Putative G-protein coupled receptor GPR32P1">
    <location>
        <begin position="1"/>
        <end position="272"/>
    </location>
</feature>
<feature type="topological domain" description="Extracellular" evidence="1">
    <location>
        <begin position="1"/>
        <end position="46"/>
    </location>
</feature>
<feature type="transmembrane region" description="Helical; Name=1" evidence="1">
    <location>
        <begin position="47"/>
        <end position="67"/>
    </location>
</feature>
<feature type="topological domain" description="Cytoplasmic" evidence="1">
    <location>
        <begin position="68"/>
        <end position="78"/>
    </location>
</feature>
<feature type="transmembrane region" description="Helical; Name=2" evidence="1">
    <location>
        <begin position="79"/>
        <end position="99"/>
    </location>
</feature>
<feature type="topological domain" description="Extracellular" evidence="1">
    <location>
        <begin position="100"/>
        <end position="116"/>
    </location>
</feature>
<feature type="transmembrane region" description="Helical; Name=3" evidence="1">
    <location>
        <begin position="117"/>
        <end position="137"/>
    </location>
</feature>
<feature type="topological domain" description="Cytoplasmic" evidence="1">
    <location>
        <begin position="138"/>
        <end position="158"/>
    </location>
</feature>
<feature type="transmembrane region" description="Helical; Name=4" evidence="1">
    <location>
        <begin position="159"/>
        <end position="179"/>
    </location>
</feature>
<feature type="topological domain" description="Extracellular" evidence="1">
    <location>
        <begin position="180"/>
        <end position="213"/>
    </location>
</feature>
<feature type="transmembrane region" description="Helical; Name=5" evidence="1">
    <location>
        <begin position="214"/>
        <end position="234"/>
    </location>
</feature>
<feature type="topological domain" description="Cytoplasmic" evidence="1">
    <location>
        <begin position="235"/>
        <end position="272"/>
    </location>
</feature>
<feature type="region of interest" description="Disordered" evidence="3">
    <location>
        <begin position="1"/>
        <end position="24"/>
    </location>
</feature>
<feature type="glycosylation site" description="N-linked (GlcNAc...) asparagine" evidence="1">
    <location>
        <position position="30"/>
    </location>
</feature>
<feature type="glycosylation site" description="N-linked (GlcNAc...) asparagine" evidence="1">
    <location>
        <position position="199"/>
    </location>
</feature>
<feature type="disulfide bond" evidence="2">
    <location>
        <begin position="114"/>
        <end position="191"/>
    </location>
</feature>
<comment type="function">
    <text>Orphan receptor.</text>
</comment>
<comment type="subcellular location">
    <subcellularLocation>
        <location>Cell membrane</location>
        <topology>Multi-pass membrane protein</topology>
    </subcellularLocation>
</comment>
<comment type="similarity">
    <text evidence="2">Belongs to the G-protein coupled receptor 1 family.</text>
</comment>
<comment type="caution">
    <text evidence="4">Could be the product of a pseudogene. In contrast to other members of the family, it is shorter at the C-terminus and lacks the last 2 transmembrane regions.</text>
</comment>
<comment type="sequence caution" evidence="4">
    <conflict type="erroneous gene model prediction">
        <sequence resource="EMBL-CDS" id="BAC06137"/>
    </conflict>
</comment>
<keyword id="KW-1003">Cell membrane</keyword>
<keyword id="KW-1015">Disulfide bond</keyword>
<keyword id="KW-0297">G-protein coupled receptor</keyword>
<keyword id="KW-0325">Glycoprotein</keyword>
<keyword id="KW-0472">Membrane</keyword>
<keyword id="KW-0675">Receptor</keyword>
<keyword id="KW-1185">Reference proteome</keyword>
<keyword id="KW-0807">Transducer</keyword>
<keyword id="KW-0812">Transmembrane</keyword>
<keyword id="KW-1133">Transmembrane helix</keyword>
<sequence length="272" mass="30291">MNGVSEGTRGCSDRQPGALTQGHSCSRKMNASRCLSEEVGSLRPLTMAVLSASFVVGVLGNGLVPWVTVFRMARTVSTVCFFHLALADFMLSLSLPILVYYIVSRQWLLGEWACKLYTGFVFLTFSTSNCLLVLISVDRCISVLYPVWALNHRTEQRASWLAFGVWLLAAALCSAHLKFRTTRKWNGCMQCYLQFNLENETAQMWTQEVFGRQMAVIMAHFLLGFLGPLAIIGTCAHLIRAKLLREGWVHANRPKRLLLVLVSALSAGSHLT</sequence>
<protein>
    <recommendedName>
        <fullName>Putative G-protein coupled receptor GPR32P1</fullName>
    </recommendedName>
    <alternativeName>
        <fullName>G-protein coupled 32 pseudogene</fullName>
    </alternativeName>
    <alternativeName>
        <fullName>G-protein coupled 32 pseudogene 1</fullName>
    </alternativeName>
    <alternativeName>
        <fullName>G-protein coupled receptor GPCR39</fullName>
        <shortName>hGPCR39</shortName>
    </alternativeName>
</protein>
<reference key="1">
    <citation type="journal article" date="2004" name="Genome Res.">
        <title>The status, quality, and expansion of the NIH full-length cDNA project: the Mammalian Gene Collection (MGC).</title>
        <authorList>
            <consortium name="The MGC Project Team"/>
        </authorList>
    </citation>
    <scope>NUCLEOTIDE SEQUENCE [LARGE SCALE MRNA]</scope>
</reference>
<reference key="2">
    <citation type="submission" date="2001-07" db="EMBL/GenBank/DDBJ databases">
        <title>Genome-wide discovery and analysis of human seven transmembrane helix receptor genes.</title>
        <authorList>
            <person name="Suwa M."/>
            <person name="Sato T."/>
            <person name="Okouchi I."/>
            <person name="Arita M."/>
            <person name="Futami K."/>
            <person name="Matsumoto S."/>
            <person name="Tsutsumi S."/>
            <person name="Aburatani H."/>
            <person name="Asai K."/>
            <person name="Akiyama Y."/>
        </authorList>
    </citation>
    <scope>NUCLEOTIDE SEQUENCE [GENOMIC DNA] OF 29-272</scope>
</reference>
<reference key="3">
    <citation type="journal article" date="2002" name="FEBS Lett.">
        <title>Identification of G protein-coupled receptor genes from the human genome sequence.</title>
        <authorList>
            <person name="Takeda S."/>
            <person name="Kadowaki S."/>
            <person name="Haga T."/>
            <person name="Takaesu H."/>
            <person name="Mitaku S."/>
        </authorList>
    </citation>
    <scope>NUCLEOTIDE SEQUENCE [LARGE SCALE GENOMIC DNA] OF 29-272</scope>
</reference>
<evidence type="ECO:0000255" key="1"/>
<evidence type="ECO:0000255" key="2">
    <source>
        <dbReference type="PROSITE-ProRule" id="PRU00521"/>
    </source>
</evidence>
<evidence type="ECO:0000256" key="3">
    <source>
        <dbReference type="SAM" id="MobiDB-lite"/>
    </source>
</evidence>
<evidence type="ECO:0000305" key="4"/>